<sequence>NLWQFGMMIQHTTRENPLFKYFSYGCYCGWGGGGPLDATDRCCFVHDCCYG</sequence>
<proteinExistence type="evidence at protein level"/>
<dbReference type="EC" id="3.1.1.4"/>
<dbReference type="SMR" id="P0DMH0"/>
<dbReference type="GO" id="GO:0005576">
    <property type="term" value="C:extracellular region"/>
    <property type="evidence" value="ECO:0007669"/>
    <property type="project" value="UniProtKB-SubCell"/>
</dbReference>
<dbReference type="GO" id="GO:0005509">
    <property type="term" value="F:calcium ion binding"/>
    <property type="evidence" value="ECO:0007669"/>
    <property type="project" value="InterPro"/>
</dbReference>
<dbReference type="GO" id="GO:0047498">
    <property type="term" value="F:calcium-dependent phospholipase A2 activity"/>
    <property type="evidence" value="ECO:0007669"/>
    <property type="project" value="TreeGrafter"/>
</dbReference>
<dbReference type="GO" id="GO:0005543">
    <property type="term" value="F:phospholipid binding"/>
    <property type="evidence" value="ECO:0007669"/>
    <property type="project" value="TreeGrafter"/>
</dbReference>
<dbReference type="GO" id="GO:0090729">
    <property type="term" value="F:toxin activity"/>
    <property type="evidence" value="ECO:0007669"/>
    <property type="project" value="UniProtKB-KW"/>
</dbReference>
<dbReference type="GO" id="GO:0050482">
    <property type="term" value="P:arachidonate secretion"/>
    <property type="evidence" value="ECO:0007669"/>
    <property type="project" value="InterPro"/>
</dbReference>
<dbReference type="GO" id="GO:0016042">
    <property type="term" value="P:lipid catabolic process"/>
    <property type="evidence" value="ECO:0007669"/>
    <property type="project" value="UniProtKB-KW"/>
</dbReference>
<dbReference type="GO" id="GO:0006644">
    <property type="term" value="P:phospholipid metabolic process"/>
    <property type="evidence" value="ECO:0007669"/>
    <property type="project" value="InterPro"/>
</dbReference>
<dbReference type="Gene3D" id="1.20.90.10">
    <property type="entry name" value="Phospholipase A2 domain"/>
    <property type="match status" value="1"/>
</dbReference>
<dbReference type="InterPro" id="IPR001211">
    <property type="entry name" value="PLipase_A2"/>
</dbReference>
<dbReference type="InterPro" id="IPR016090">
    <property type="entry name" value="PLipase_A2_dom"/>
</dbReference>
<dbReference type="InterPro" id="IPR036444">
    <property type="entry name" value="PLipase_A2_dom_sf"/>
</dbReference>
<dbReference type="InterPro" id="IPR033113">
    <property type="entry name" value="PLipase_A2_His_AS"/>
</dbReference>
<dbReference type="PANTHER" id="PTHR11716:SF100">
    <property type="entry name" value="PHOSPHOLIPASE A2"/>
    <property type="match status" value="1"/>
</dbReference>
<dbReference type="PANTHER" id="PTHR11716">
    <property type="entry name" value="PHOSPHOLIPASE A2 FAMILY MEMBER"/>
    <property type="match status" value="1"/>
</dbReference>
<dbReference type="Pfam" id="PF00068">
    <property type="entry name" value="Phospholip_A2_1"/>
    <property type="match status" value="1"/>
</dbReference>
<dbReference type="PRINTS" id="PR00389">
    <property type="entry name" value="PHPHLIPASEA2"/>
</dbReference>
<dbReference type="SMART" id="SM00085">
    <property type="entry name" value="PA2c"/>
    <property type="match status" value="1"/>
</dbReference>
<dbReference type="SUPFAM" id="SSF48619">
    <property type="entry name" value="Phospholipase A2, PLA2"/>
    <property type="match status" value="1"/>
</dbReference>
<dbReference type="PROSITE" id="PS00118">
    <property type="entry name" value="PA2_HIS"/>
    <property type="match status" value="1"/>
</dbReference>
<evidence type="ECO:0000250" key="1"/>
<evidence type="ECO:0000255" key="2">
    <source>
        <dbReference type="PROSITE-ProRule" id="PRU10035"/>
    </source>
</evidence>
<evidence type="ECO:0000255" key="3">
    <source>
        <dbReference type="PROSITE-ProRule" id="PRU10036"/>
    </source>
</evidence>
<evidence type="ECO:0000305" key="4"/>
<organism>
    <name type="scientific">Bothrops fonsecai</name>
    <name type="common">Fonseca's lancehead</name>
    <name type="synonym">Rhinocerophis fonsecai</name>
    <dbReference type="NCBI Taxonomy" id="157549"/>
    <lineage>
        <taxon>Eukaryota</taxon>
        <taxon>Metazoa</taxon>
        <taxon>Chordata</taxon>
        <taxon>Craniata</taxon>
        <taxon>Vertebrata</taxon>
        <taxon>Euteleostomi</taxon>
        <taxon>Lepidosauria</taxon>
        <taxon>Squamata</taxon>
        <taxon>Bifurcata</taxon>
        <taxon>Unidentata</taxon>
        <taxon>Episquamata</taxon>
        <taxon>Toxicofera</taxon>
        <taxon>Serpentes</taxon>
        <taxon>Colubroidea</taxon>
        <taxon>Viperidae</taxon>
        <taxon>Crotalinae</taxon>
        <taxon>Bothrops</taxon>
    </lineage>
</organism>
<feature type="chain" id="PRO_0000428810" description="Basic phospholipase A2 Bfon11">
    <location>
        <begin position="1"/>
        <end position="51" status="greater than"/>
    </location>
</feature>
<feature type="active site" evidence="2 3">
    <location>
        <position position="46"/>
    </location>
</feature>
<feature type="binding site" evidence="1">
    <location>
        <position position="27"/>
    </location>
    <ligand>
        <name>Ca(2+)</name>
        <dbReference type="ChEBI" id="CHEBI:29108"/>
    </ligand>
</feature>
<feature type="binding site" evidence="1">
    <location>
        <position position="29"/>
    </location>
    <ligand>
        <name>Ca(2+)</name>
        <dbReference type="ChEBI" id="CHEBI:29108"/>
    </ligand>
</feature>
<feature type="binding site" evidence="1">
    <location>
        <position position="31"/>
    </location>
    <ligand>
        <name>Ca(2+)</name>
        <dbReference type="ChEBI" id="CHEBI:29108"/>
    </ligand>
</feature>
<feature type="binding site" evidence="1">
    <location>
        <position position="47"/>
    </location>
    <ligand>
        <name>Ca(2+)</name>
        <dbReference type="ChEBI" id="CHEBI:29108"/>
    </ligand>
</feature>
<feature type="disulfide bond" evidence="1">
    <location>
        <begin position="28"/>
        <end position="43"/>
    </location>
</feature>
<feature type="non-terminal residue">
    <location>
        <position position="51"/>
    </location>
</feature>
<comment type="function">
    <text evidence="1">Snake venom phospholipase A2 (PLA2) that impairs hemostasis. PLA2 catalyzes the calcium-dependent hydrolysis of the 2-acyl groups in 3-sn-phosphoglycerides (By similarity).</text>
</comment>
<comment type="catalytic activity">
    <reaction evidence="2 3">
        <text>a 1,2-diacyl-sn-glycero-3-phosphocholine + H2O = a 1-acyl-sn-glycero-3-phosphocholine + a fatty acid + H(+)</text>
        <dbReference type="Rhea" id="RHEA:15801"/>
        <dbReference type="ChEBI" id="CHEBI:15377"/>
        <dbReference type="ChEBI" id="CHEBI:15378"/>
        <dbReference type="ChEBI" id="CHEBI:28868"/>
        <dbReference type="ChEBI" id="CHEBI:57643"/>
        <dbReference type="ChEBI" id="CHEBI:58168"/>
        <dbReference type="EC" id="3.1.1.4"/>
    </reaction>
</comment>
<comment type="cofactor">
    <cofactor evidence="1">
        <name>Ca(2+)</name>
        <dbReference type="ChEBI" id="CHEBI:29108"/>
    </cofactor>
    <text evidence="1">Binds 1 Ca(2+) ion.</text>
</comment>
<comment type="subcellular location">
    <subcellularLocation>
        <location>Secreted</location>
    </subcellularLocation>
</comment>
<comment type="tissue specificity">
    <text>Expressed by the venom gland.</text>
</comment>
<comment type="similarity">
    <text evidence="4">Belongs to the phospholipase A2 family. Group II subfamily. D49 sub-subfamily.</text>
</comment>
<keyword id="KW-0106">Calcium</keyword>
<keyword id="KW-0903">Direct protein sequencing</keyword>
<keyword id="KW-1015">Disulfide bond</keyword>
<keyword id="KW-1199">Hemostasis impairing toxin</keyword>
<keyword id="KW-0378">Hydrolase</keyword>
<keyword id="KW-0442">Lipid degradation</keyword>
<keyword id="KW-0443">Lipid metabolism</keyword>
<keyword id="KW-0479">Metal-binding</keyword>
<keyword id="KW-0964">Secreted</keyword>
<keyword id="KW-0800">Toxin</keyword>
<accession>P0DMH0</accession>
<name>PA2A_BOTFO</name>
<reference key="1">
    <citation type="journal article" date="2008" name="J. Proteomics">
        <title>Snake venomics of the Brazilian pitvipers Bothrops cotiara and Bothrops fonsecai. Identification of taxonomy markers.</title>
        <authorList>
            <person name="Tashima A.K."/>
            <person name="Sanz L."/>
            <person name="Camargo A.C."/>
            <person name="Serrano S.M."/>
            <person name="Calvete J.J."/>
        </authorList>
    </citation>
    <scope>PROTEIN SEQUENCE</scope>
    <source>
        <tissue>Venom</tissue>
    </source>
</reference>
<protein>
    <recommendedName>
        <fullName>Basic phospholipase A2 Bfon11</fullName>
        <shortName>svPLA2</shortName>
        <ecNumber>3.1.1.4</ecNumber>
    </recommendedName>
    <alternativeName>
        <fullName>Phosphatidylcholine 2-acylhydrolase</fullName>
    </alternativeName>
</protein>